<proteinExistence type="evidence at protein level"/>
<protein>
    <recommendedName>
        <fullName>Delta(5) fatty acid desaturase fat-4</fullName>
        <shortName evidence="7 8">FAT-4</shortName>
        <ecNumber evidence="6">1.14.19.37</ecNumber>
        <ecNumber evidence="3 6">1.14.19.44</ecNumber>
    </recommendedName>
    <alternativeName>
        <fullName evidence="7">FAT-4 Delta(5) desaturase</fullName>
    </alternativeName>
    <alternativeName>
        <fullName>Fatty acid desaturase 4</fullName>
    </alternativeName>
</protein>
<sequence length="447" mass="52348">MVLREQEHEPFFIKIDGKWCQIDDAVLRSHPGGSAITTYKNMDATTVFHTFHTGSKEAYQWLTELKKECPTQEPEIPDIKDDPIKGIDDVNMGTFNISEKRSAQINKSFTDLRMRVRAEGLMDGSPLFYIRKILETIFTILFAFYLQYHTYYLPSAILMGVAWQQLGWLIHEFAHHQLFKNRYYNDLASYFVGNFLQGFSSGGWKEQHNVHHAATNVVGRDGDLDLVPFYATVAEHLNNYSQDSWVMTLFRWQHVHWTFMLPFLRLSWLLQSIIFVSQMPTHYYDYYRNTAIYEQVGLSLHWAWSLGQLYFLPDWSTRIMFFLVSHLVGGFLLSHVVTFNHYSVEKFALSSNIMSNYACLQIMTTRNMRPGRFIDWLWGGLNYQIEHHLFPTMPRHNLNTVMPLVKEFAAANGLPYMVDDYFTGFWLEIEQFRNIANVAAKLTKKIA</sequence>
<name>FAT4_CAEEL</name>
<dbReference type="EC" id="1.14.19.37" evidence="6"/>
<dbReference type="EC" id="1.14.19.44" evidence="3 6"/>
<dbReference type="EMBL" id="AF078796">
    <property type="protein sequence ID" value="AAC95143.1"/>
    <property type="molecule type" value="mRNA"/>
</dbReference>
<dbReference type="EMBL" id="AF114440">
    <property type="protein sequence ID" value="AAD13294.1"/>
    <property type="molecule type" value="mRNA"/>
</dbReference>
<dbReference type="EMBL" id="Z81122">
    <property type="protein sequence ID" value="CAB61031.1"/>
    <property type="molecule type" value="Genomic_DNA"/>
</dbReference>
<dbReference type="EMBL" id="Z81122">
    <property type="protein sequence ID" value="CBL43456.1"/>
    <property type="molecule type" value="Genomic_DNA"/>
</dbReference>
<dbReference type="EMBL" id="Z81122">
    <property type="protein sequence ID" value="CBZ01822.1"/>
    <property type="molecule type" value="Genomic_DNA"/>
</dbReference>
<dbReference type="PIR" id="T43319">
    <property type="entry name" value="T43319"/>
</dbReference>
<dbReference type="RefSeq" id="NP_001255423.1">
    <molecule id="G5EG11-1"/>
    <property type="nucleotide sequence ID" value="NM_001268494.2"/>
</dbReference>
<dbReference type="RefSeq" id="NP_001255424.1">
    <molecule id="G5EG11-2"/>
    <property type="nucleotide sequence ID" value="NM_001268495.3"/>
</dbReference>
<dbReference type="RefSeq" id="NP_001255425.1">
    <molecule id="G5EG11-3"/>
    <property type="nucleotide sequence ID" value="NM_001268496.3"/>
</dbReference>
<dbReference type="BioGRID" id="42923">
    <property type="interactions" value="1"/>
</dbReference>
<dbReference type="FunCoup" id="G5EG11">
    <property type="interactions" value="777"/>
</dbReference>
<dbReference type="STRING" id="6239.T13F2.1a.1"/>
<dbReference type="SwissLipids" id="SLP:000000268"/>
<dbReference type="PaxDb" id="6239-T13F2.1a.1"/>
<dbReference type="PeptideAtlas" id="G5EG11"/>
<dbReference type="EnsemblMetazoa" id="T13F2.1a.1">
    <molecule id="G5EG11-1"/>
    <property type="protein sequence ID" value="T13F2.1a.1"/>
    <property type="gene ID" value="WBGene00001396"/>
</dbReference>
<dbReference type="EnsemblMetazoa" id="T13F2.1b.1">
    <molecule id="G5EG11-2"/>
    <property type="protein sequence ID" value="T13F2.1b.1"/>
    <property type="gene ID" value="WBGene00001396"/>
</dbReference>
<dbReference type="EnsemblMetazoa" id="T13F2.1c.1">
    <molecule id="G5EG11-3"/>
    <property type="protein sequence ID" value="T13F2.1c.1"/>
    <property type="gene ID" value="WBGene00001396"/>
</dbReference>
<dbReference type="GeneID" id="177819"/>
<dbReference type="KEGG" id="cel:CELE_T13F2.1"/>
<dbReference type="AGR" id="WB:WBGene00001396"/>
<dbReference type="CTD" id="177819"/>
<dbReference type="WormBase" id="T13F2.1a">
    <molecule id="G5EG11-1"/>
    <property type="protein sequence ID" value="CE25113"/>
    <property type="gene ID" value="WBGene00001396"/>
    <property type="gene designation" value="fat-4"/>
</dbReference>
<dbReference type="WormBase" id="T13F2.1b">
    <molecule id="G5EG11-2"/>
    <property type="protein sequence ID" value="CE44752"/>
    <property type="gene ID" value="WBGene00001396"/>
    <property type="gene designation" value="fat-4"/>
</dbReference>
<dbReference type="WormBase" id="T13F2.1c">
    <molecule id="G5EG11-3"/>
    <property type="protein sequence ID" value="CE45810"/>
    <property type="gene ID" value="WBGene00001396"/>
    <property type="gene designation" value="fat-4"/>
</dbReference>
<dbReference type="eggNOG" id="KOG4232">
    <property type="taxonomic scope" value="Eukaryota"/>
</dbReference>
<dbReference type="GeneTree" id="ENSGT00950000182990"/>
<dbReference type="HOGENOM" id="CLU_016265_1_1_1"/>
<dbReference type="InParanoid" id="G5EG11"/>
<dbReference type="OMA" id="LSANWWN"/>
<dbReference type="OrthoDB" id="260091at2759"/>
<dbReference type="PhylomeDB" id="G5EG11"/>
<dbReference type="Reactome" id="R-CEL-2046105">
    <property type="pathway name" value="Linoleic acid (LA) metabolism"/>
</dbReference>
<dbReference type="Reactome" id="R-CEL-2046106">
    <property type="pathway name" value="alpha-linolenic acid (ALA) metabolism"/>
</dbReference>
<dbReference type="UniPathway" id="UPA00658"/>
<dbReference type="PRO" id="PR:G5EG11"/>
<dbReference type="Proteomes" id="UP000001940">
    <property type="component" value="Chromosome IV"/>
</dbReference>
<dbReference type="Bgee" id="WBGene00001396">
    <property type="expression patterns" value="Expressed in adult organism and 4 other cell types or tissues"/>
</dbReference>
<dbReference type="GO" id="GO:0016020">
    <property type="term" value="C:membrane"/>
    <property type="evidence" value="ECO:0007669"/>
    <property type="project" value="UniProtKB-SubCell"/>
</dbReference>
<dbReference type="GO" id="GO:0062076">
    <property type="term" value="F:acyl-CoA (8-3)-desaturase activity"/>
    <property type="evidence" value="ECO:0007669"/>
    <property type="project" value="UniProtKB-EC"/>
</dbReference>
<dbReference type="GO" id="GO:0016717">
    <property type="term" value="F:oxidoreductase activity, acting on paired donors, with oxidation of a pair of donors resulting in the reduction of molecular oxygen to two molecules of water"/>
    <property type="evidence" value="ECO:0000318"/>
    <property type="project" value="GO_Central"/>
</dbReference>
<dbReference type="GO" id="GO:0004768">
    <property type="term" value="F:stearoyl-CoA 9-desaturase activity"/>
    <property type="evidence" value="ECO:0000314"/>
    <property type="project" value="WormBase"/>
</dbReference>
<dbReference type="GO" id="GO:0006629">
    <property type="term" value="P:lipid metabolic process"/>
    <property type="evidence" value="ECO:0000318"/>
    <property type="project" value="GO_Central"/>
</dbReference>
<dbReference type="GO" id="GO:0006636">
    <property type="term" value="P:unsaturated fatty acid biosynthetic process"/>
    <property type="evidence" value="ECO:0000315"/>
    <property type="project" value="WormBase"/>
</dbReference>
<dbReference type="CDD" id="cd03506">
    <property type="entry name" value="Delta6-FADS-like"/>
    <property type="match status" value="1"/>
</dbReference>
<dbReference type="Gene3D" id="3.10.120.10">
    <property type="entry name" value="Cytochrome b5-like heme/steroid binding domain"/>
    <property type="match status" value="1"/>
</dbReference>
<dbReference type="InterPro" id="IPR036400">
    <property type="entry name" value="Cyt_B5-like_heme/steroid_sf"/>
</dbReference>
<dbReference type="InterPro" id="IPR005804">
    <property type="entry name" value="FA_desaturase_dom"/>
</dbReference>
<dbReference type="InterPro" id="IPR012171">
    <property type="entry name" value="Fatty_acid_desaturase"/>
</dbReference>
<dbReference type="PANTHER" id="PTHR19353:SF88">
    <property type="entry name" value="DELTA(5) FATTY ACID DESATURASE FAT-4"/>
    <property type="match status" value="1"/>
</dbReference>
<dbReference type="PANTHER" id="PTHR19353">
    <property type="entry name" value="FATTY ACID DESATURASE 2"/>
    <property type="match status" value="1"/>
</dbReference>
<dbReference type="Pfam" id="PF00487">
    <property type="entry name" value="FA_desaturase"/>
    <property type="match status" value="1"/>
</dbReference>
<dbReference type="PIRSF" id="PIRSF015921">
    <property type="entry name" value="FA_sphinglp_des"/>
    <property type="match status" value="1"/>
</dbReference>
<dbReference type="SUPFAM" id="SSF55856">
    <property type="entry name" value="Cytochrome b5-like heme/steroid binding domain"/>
    <property type="match status" value="1"/>
</dbReference>
<feature type="chain" id="PRO_0000423386" description="Delta(5) fatty acid desaturase fat-4">
    <location>
        <begin position="1"/>
        <end position="447"/>
    </location>
</feature>
<feature type="transmembrane region" description="Helical" evidence="2">
    <location>
        <begin position="137"/>
        <end position="157"/>
    </location>
</feature>
<feature type="transmembrane region" description="Helical" evidence="2">
    <location>
        <begin position="257"/>
        <end position="277"/>
    </location>
</feature>
<feature type="transmembrane region" description="Helical" evidence="2">
    <location>
        <begin position="292"/>
        <end position="312"/>
    </location>
</feature>
<feature type="transmembrane region" description="Helical" evidence="2">
    <location>
        <begin position="319"/>
        <end position="339"/>
    </location>
</feature>
<feature type="domain" description="Cytochrome b5 heme-binding">
    <location>
        <begin position="1"/>
        <end position="80"/>
    </location>
</feature>
<feature type="splice variant" id="VSP_047788" description="In isoform c." evidence="9">
    <location>
        <begin position="1"/>
        <end position="392"/>
    </location>
</feature>
<feature type="splice variant" id="VSP_047789" description="In isoform b." evidence="9">
    <location>
        <begin position="1"/>
        <end position="91"/>
    </location>
</feature>
<organism>
    <name type="scientific">Caenorhabditis elegans</name>
    <dbReference type="NCBI Taxonomy" id="6239"/>
    <lineage>
        <taxon>Eukaryota</taxon>
        <taxon>Metazoa</taxon>
        <taxon>Ecdysozoa</taxon>
        <taxon>Nematoda</taxon>
        <taxon>Chromadorea</taxon>
        <taxon>Rhabditida</taxon>
        <taxon>Rhabditina</taxon>
        <taxon>Rhabditomorpha</taxon>
        <taxon>Rhabditoidea</taxon>
        <taxon>Rhabditidae</taxon>
        <taxon>Peloderinae</taxon>
        <taxon>Caenorhabditis</taxon>
    </lineage>
</organism>
<gene>
    <name type="primary">fat-4</name>
    <name type="synonym">des-5</name>
    <name type="ORF">T13F2.1</name>
</gene>
<accession>G5EG11</accession>
<accession>D5MCT8</accession>
<accession>E9P887</accession>
<reference key="1">
    <citation type="journal article" date="1998" name="FEBS Lett.">
        <title>Functional identification of a fatty acid delta5 desaturase gene from Caenorhabditis elegans.</title>
        <authorList>
            <person name="Michaelson L.V."/>
            <person name="Napier J.A."/>
            <person name="Lewis M."/>
            <person name="Griffiths G."/>
            <person name="Lazarus C.M."/>
            <person name="Stobart A.K."/>
        </authorList>
    </citation>
    <scope>NUCLEOTIDE SEQUENCE [MRNA] (ISOFORM A)</scope>
    <scope>FUNCTION</scope>
    <scope>PATHWAY</scope>
</reference>
<reference key="2">
    <citation type="journal article" date="1999" name="Arch. Biochem. Biophys.">
        <title>Isolation and characterization of a Delta 5-fatty acid desaturase from Caenorhabditis elegans.</title>
        <authorList>
            <person name="Watts J.L."/>
            <person name="Browse J."/>
        </authorList>
    </citation>
    <scope>NUCLEOTIDE SEQUENCE [MRNA] (ISOFORM A)</scope>
    <scope>FUNCTION</scope>
    <scope>CATALYTIC ACTIVITY</scope>
    <scope>PATHWAY</scope>
</reference>
<reference key="3">
    <citation type="journal article" date="1998" name="Science">
        <title>Genome sequence of the nematode C. elegans: a platform for investigating biology.</title>
        <authorList>
            <consortium name="The C. elegans sequencing consortium"/>
        </authorList>
    </citation>
    <scope>NUCLEOTIDE SEQUENCE [LARGE SCALE GENOMIC DNA]</scope>
    <source>
        <strain>Bristol N2</strain>
    </source>
</reference>
<reference key="4">
    <citation type="journal article" date="2002" name="Proc. Natl. Acad. Sci. U.S.A.">
        <title>Genetic dissection of polyunsaturated fatty acid synthesis in Caenorhabditis elegans.</title>
        <authorList>
            <person name="Watts J.L."/>
            <person name="Browse J."/>
        </authorList>
    </citation>
    <scope>FUNCTION</scope>
    <scope>CATALYTIC ACTIVITY</scope>
    <scope>PATHWAY</scope>
    <scope>DISRUPTION PHENOTYPE</scope>
</reference>
<reference key="5">
    <citation type="journal article" date="2016" name="Biochim. Biophys. Acta">
        <title>The cytochrome b5 reductase HPO-19 is required for biosynthesis of polyunsaturated fatty acids in Caenorhabditis elegans.</title>
        <authorList>
            <person name="Zhang Y."/>
            <person name="Wang H."/>
            <person name="Zhang J."/>
            <person name="Hu Y."/>
            <person name="Zhang L."/>
            <person name="Wu X."/>
            <person name="Su X."/>
            <person name="Li T."/>
            <person name="Zou X."/>
            <person name="Liang B."/>
        </authorList>
    </citation>
    <scope>FUNCTION</scope>
    <scope>CATALYTIC ACTIVITY</scope>
</reference>
<keyword id="KW-0025">Alternative splicing</keyword>
<keyword id="KW-0275">Fatty acid biosynthesis</keyword>
<keyword id="KW-0276">Fatty acid metabolism</keyword>
<keyword id="KW-0444">Lipid biosynthesis</keyword>
<keyword id="KW-0443">Lipid metabolism</keyword>
<keyword id="KW-0472">Membrane</keyword>
<keyword id="KW-0560">Oxidoreductase</keyword>
<keyword id="KW-1185">Reference proteome</keyword>
<keyword id="KW-0812">Transmembrane</keyword>
<keyword id="KW-1133">Transmembrane helix</keyword>
<evidence type="ECO:0000250" key="1">
    <source>
        <dbReference type="UniProtKB" id="G5EGA5"/>
    </source>
</evidence>
<evidence type="ECO:0000255" key="2"/>
<evidence type="ECO:0000269" key="3">
    <source>
    </source>
</evidence>
<evidence type="ECO:0000269" key="4">
    <source>
    </source>
</evidence>
<evidence type="ECO:0000269" key="5">
    <source>
    </source>
</evidence>
<evidence type="ECO:0000269" key="6">
    <source>
    </source>
</evidence>
<evidence type="ECO:0000303" key="7">
    <source>
    </source>
</evidence>
<evidence type="ECO:0000303" key="8">
    <source>
    </source>
</evidence>
<evidence type="ECO:0000305" key="9"/>
<evidence type="ECO:0000305" key="10">
    <source>
    </source>
</evidence>
<evidence type="ECO:0000305" key="11">
    <source>
    </source>
</evidence>
<comment type="function">
    <text evidence="1 3 4 5 6">Can function as a Delta(5) fatty acid desaturase and behaves as a (8-3) desaturase. Introduces a double bond in the fatty acid chain 5 carbons away from carboxy terminal to biosynthesize polyunsaturated fatty acids (PUFAs) endogenously (PUFAs are essential for membrane structure and many cellular and physiological processes). Acts on a variety of substrates such as dihomo-gamma-linoleoyl-CoA ((8Z,11Z,14Z)-eicosatrienoyl-CoA, 20:3n-6) to generate arachidonoyl-CoA ((5Z,8Z,11Z,14Z)-eicosatetraenoyl-CoA, 20:4n-6). Also acts on a number of other substrates, including fatty acids that do not contain a double bond at the 8 position like (11Z,14Z,17Z)-eicosatrienoyl-CoA (20:3n-3) to produce (5Z,11Z,14Z,17Z)-eicosatetraenoyl-CoA (20:4n-3) (PubMed:11972048, PubMed:26806391, PubMed:9845325, PubMed:9917342). Unlike plants, Caenorhabditis elegans desaturases seem to use fatty acyl-CoAs as substrates (By similarity).</text>
</comment>
<comment type="catalytic activity">
    <reaction evidence="6">
        <text>(11Z,14Z)-eicosadienoyl-CoA + 2 Fe(II)-[cytochrome b5] + O2 + 2 H(+) = (5Z,11Z,14Z)-eicosatrienoyl-CoA + 2 Fe(III)-[cytochrome b5] + 2 H2O</text>
        <dbReference type="Rhea" id="RHEA:46524"/>
        <dbReference type="Rhea" id="RHEA-COMP:10438"/>
        <dbReference type="Rhea" id="RHEA-COMP:10439"/>
        <dbReference type="ChEBI" id="CHEBI:15377"/>
        <dbReference type="ChEBI" id="CHEBI:15378"/>
        <dbReference type="ChEBI" id="CHEBI:15379"/>
        <dbReference type="ChEBI" id="CHEBI:29033"/>
        <dbReference type="ChEBI" id="CHEBI:29034"/>
        <dbReference type="ChEBI" id="CHEBI:76410"/>
        <dbReference type="ChEBI" id="CHEBI:78663"/>
        <dbReference type="EC" id="1.14.19.37"/>
    </reaction>
    <physiologicalReaction direction="left-to-right" evidence="11">
        <dbReference type="Rhea" id="RHEA:46525"/>
    </physiologicalReaction>
</comment>
<comment type="catalytic activity">
    <reaction evidence="6">
        <text>(11Z,14Z,17Z)-eicosatrienoyl-CoA + 2 Fe(II)-[cytochrome b5] + O2 + 2 H(+) = (5Z,11Z,14Z,17Z)-eicosatetraenoyl-CoA + 2 Fe(III)-[cytochrome b5] + 2 H2O</text>
        <dbReference type="Rhea" id="RHEA:46528"/>
        <dbReference type="Rhea" id="RHEA-COMP:10438"/>
        <dbReference type="Rhea" id="RHEA-COMP:10439"/>
        <dbReference type="ChEBI" id="CHEBI:15377"/>
        <dbReference type="ChEBI" id="CHEBI:15378"/>
        <dbReference type="ChEBI" id="CHEBI:15379"/>
        <dbReference type="ChEBI" id="CHEBI:29033"/>
        <dbReference type="ChEBI" id="CHEBI:29034"/>
        <dbReference type="ChEBI" id="CHEBI:74328"/>
        <dbReference type="ChEBI" id="CHEBI:78664"/>
        <dbReference type="EC" id="1.14.19.37"/>
    </reaction>
    <physiologicalReaction direction="left-to-right" evidence="11">
        <dbReference type="Rhea" id="RHEA:46529"/>
    </physiologicalReaction>
</comment>
<comment type="catalytic activity">
    <reaction evidence="3 10">
        <text>(8Z,11Z,14Z,17Z)-eicosatetraenoyl-CoA + 2 Fe(II)-[cytochrome b5] + O2 + 2 H(+) = (5Z,8Z,11Z,14Z,17Z)-eicosapentaenoyl-CoA + 2 Fe(III)-[cytochrome b5] + 2 H2O</text>
        <dbReference type="Rhea" id="RHEA:46420"/>
        <dbReference type="Rhea" id="RHEA-COMP:10438"/>
        <dbReference type="Rhea" id="RHEA-COMP:10439"/>
        <dbReference type="ChEBI" id="CHEBI:15377"/>
        <dbReference type="ChEBI" id="CHEBI:15378"/>
        <dbReference type="ChEBI" id="CHEBI:15379"/>
        <dbReference type="ChEBI" id="CHEBI:29033"/>
        <dbReference type="ChEBI" id="CHEBI:29034"/>
        <dbReference type="ChEBI" id="CHEBI:73862"/>
        <dbReference type="ChEBI" id="CHEBI:74265"/>
        <dbReference type="EC" id="1.14.19.44"/>
    </reaction>
    <physiologicalReaction direction="left-to-right" evidence="3 10">
        <dbReference type="Rhea" id="RHEA:46421"/>
    </physiologicalReaction>
</comment>
<comment type="catalytic activity">
    <reaction evidence="3 6 10">
        <text>(8Z,11Z,14Z)-eicosatrienoyl-CoA + 2 Fe(II)-[cytochrome b5] + O2 + 2 H(+) = (5Z,8Z,11Z,14Z)-eicosatetraenoyl-CoA + 2 Fe(III)-[cytochrome b5] + 2 H2O</text>
        <dbReference type="Rhea" id="RHEA:46424"/>
        <dbReference type="Rhea" id="RHEA-COMP:10438"/>
        <dbReference type="Rhea" id="RHEA-COMP:10439"/>
        <dbReference type="ChEBI" id="CHEBI:15377"/>
        <dbReference type="ChEBI" id="CHEBI:15378"/>
        <dbReference type="ChEBI" id="CHEBI:15379"/>
        <dbReference type="ChEBI" id="CHEBI:29033"/>
        <dbReference type="ChEBI" id="CHEBI:29034"/>
        <dbReference type="ChEBI" id="CHEBI:57368"/>
        <dbReference type="ChEBI" id="CHEBI:74264"/>
        <dbReference type="EC" id="1.14.19.44"/>
    </reaction>
    <physiologicalReaction direction="left-to-right" evidence="3 10 11">
        <dbReference type="Rhea" id="RHEA:46425"/>
    </physiologicalReaction>
</comment>
<comment type="pathway">
    <text evidence="3 5 6">Lipid metabolism; polyunsaturated fatty acid biosynthesis.</text>
</comment>
<comment type="subcellular location">
    <subcellularLocation>
        <location evidence="9">Membrane</location>
        <topology evidence="9">Multi-pass membrane protein</topology>
    </subcellularLocation>
</comment>
<comment type="alternative products">
    <event type="alternative splicing"/>
    <isoform>
        <id>G5EG11-1</id>
        <name>a</name>
        <sequence type="displayed"/>
    </isoform>
    <isoform>
        <id>G5EG11-2</id>
        <name>b</name>
        <sequence type="described" ref="VSP_047789"/>
    </isoform>
    <isoform>
        <id>G5EG11-3</id>
        <name>c</name>
        <sequence type="described" ref="VSP_047788"/>
    </isoform>
</comment>
<comment type="disruption phenotype">
    <text evidence="3">The fat-4 mutants lack detectable Delta(5)-unsaturated fatty acids.</text>
</comment>
<comment type="miscellaneous">
    <text evidence="4">HPO-19 and T05H4.4 are cytochrome b5 reductases required for PUFA desaturation in Caenorhabditis elegans. HPO-19 knockdown or mutation alters FAT-4 desaturase activity.</text>
</comment>
<comment type="similarity">
    <text evidence="9">Belongs to the fatty acid desaturase type 1 family.</text>
</comment>